<organism>
    <name type="scientific">Cyberlindnera jadinii</name>
    <name type="common">Torula yeast</name>
    <name type="synonym">Pichia jadinii</name>
    <dbReference type="NCBI Taxonomy" id="4903"/>
    <lineage>
        <taxon>Eukaryota</taxon>
        <taxon>Fungi</taxon>
        <taxon>Dikarya</taxon>
        <taxon>Ascomycota</taxon>
        <taxon>Saccharomycotina</taxon>
        <taxon>Saccharomycetes</taxon>
        <taxon>Phaffomycetales</taxon>
        <taxon>Phaffomycetaceae</taxon>
        <taxon>Cyberlindnera</taxon>
    </lineage>
</organism>
<comment type="function">
    <text>This protein forms a one-to-one complex with ATPase to inhibit the enzyme activity completely.</text>
</comment>
<comment type="subcellular location">
    <subcellularLocation>
        <location>Mitochondrion</location>
    </subcellularLocation>
</comment>
<comment type="similarity">
    <text evidence="4">Belongs to the ATPase inhibitor family.</text>
</comment>
<reference key="1">
    <citation type="journal article" date="1987" name="Eur. J. Biochem.">
        <title>Complete amino-acid sequence of the natural ATPase inhibitor from the mitochondria of the yeast Candida utilis.</title>
        <authorList>
            <person name="Dianoux A.C."/>
            <person name="Hoppe J."/>
        </authorList>
    </citation>
    <scope>PROTEIN SEQUENCE</scope>
</reference>
<proteinExistence type="evidence at protein level"/>
<dbReference type="PIR" id="A27536">
    <property type="entry name" value="A27536"/>
</dbReference>
<dbReference type="GO" id="GO:0005739">
    <property type="term" value="C:mitochondrion"/>
    <property type="evidence" value="ECO:0007669"/>
    <property type="project" value="UniProtKB-SubCell"/>
</dbReference>
<dbReference type="GO" id="GO:0042030">
    <property type="term" value="F:ATPase inhibitor activity"/>
    <property type="evidence" value="ECO:0007669"/>
    <property type="project" value="InterPro"/>
</dbReference>
<dbReference type="FunFam" id="1.20.5.500:FF:000006">
    <property type="entry name" value="ATPase inhibitor, mitochondrial"/>
    <property type="match status" value="1"/>
</dbReference>
<dbReference type="Gene3D" id="1.20.5.500">
    <property type="entry name" value="Single helix bin"/>
    <property type="match status" value="1"/>
</dbReference>
<dbReference type="InterPro" id="IPR007648">
    <property type="entry name" value="ATPase_inhibitor_mt"/>
</dbReference>
<dbReference type="Pfam" id="PF04568">
    <property type="entry name" value="IATP"/>
    <property type="match status" value="1"/>
</dbReference>
<dbReference type="SUPFAM" id="SSF64602">
    <property type="entry name" value="F1 ATPase inhibitor, IF1, C-terminal domain"/>
    <property type="match status" value="1"/>
</dbReference>
<protein>
    <recommendedName>
        <fullName evidence="4">ATPase inhibitor, mitochondrial</fullName>
    </recommendedName>
    <alternativeName>
        <fullName evidence="1">ATP synthase F1 subunit epsilon</fullName>
    </alternativeName>
</protein>
<name>ATIF_CYBJA</name>
<evidence type="ECO:0000250" key="1">
    <source>
        <dbReference type="UniProtKB" id="Q9UII2"/>
    </source>
</evidence>
<evidence type="ECO:0000255" key="2"/>
<evidence type="ECO:0000256" key="3">
    <source>
        <dbReference type="SAM" id="MobiDB-lite"/>
    </source>
</evidence>
<evidence type="ECO:0000305" key="4"/>
<sequence length="63" mass="7192">TAGATGATRQDGSTDAFEKREKAQEDLYIRQHEKEQLEALKESLKKQKKSLDDLEBKIDDLTK</sequence>
<keyword id="KW-0175">Coiled coil</keyword>
<keyword id="KW-0903">Direct protein sequencing</keyword>
<keyword id="KW-0496">Mitochondrion</keyword>
<feature type="chain" id="PRO_0000193522" description="ATPase inhibitor, mitochondrial">
    <location>
        <begin position="1"/>
        <end position="63"/>
    </location>
</feature>
<feature type="region of interest" description="Disordered" evidence="3">
    <location>
        <begin position="1"/>
        <end position="23"/>
    </location>
</feature>
<feature type="coiled-coil region" evidence="2">
    <location>
        <begin position="18"/>
        <end position="62"/>
    </location>
</feature>
<accession>P09940</accession>